<evidence type="ECO:0000250" key="1">
    <source>
        <dbReference type="UniProtKB" id="Q5NUF3"/>
    </source>
</evidence>
<evidence type="ECO:0000250" key="2">
    <source>
        <dbReference type="UniProtKB" id="Q8BLF1"/>
    </source>
</evidence>
<evidence type="ECO:0000255" key="3"/>
<evidence type="ECO:0000305" key="4"/>
<evidence type="ECO:0000312" key="5">
    <source>
        <dbReference type="MGI" id="MGI:2685880"/>
    </source>
</evidence>
<keyword id="KW-0325">Glycoprotein</keyword>
<keyword id="KW-0378">Hydrolase</keyword>
<keyword id="KW-0472">Membrane</keyword>
<keyword id="KW-1185">Reference proteome</keyword>
<keyword id="KW-0735">Signal-anchor</keyword>
<keyword id="KW-0812">Transmembrane</keyword>
<keyword id="KW-1133">Transmembrane helix</keyword>
<accession>Q8BM81</accession>
<accession>A2A751</accession>
<feature type="chain" id="PRO_0000265938" description="Arylacetamide deacetylase-like 4 family member 1">
    <location>
        <begin position="1"/>
        <end position="407"/>
    </location>
</feature>
<feature type="topological domain" description="Cytoplasmic" evidence="3">
    <location>
        <begin position="1"/>
        <end position="4"/>
    </location>
</feature>
<feature type="transmembrane region" description="Helical; Signal-anchor for type II membrane protein" evidence="3">
    <location>
        <begin position="5"/>
        <end position="25"/>
    </location>
</feature>
<feature type="topological domain" description="Lumenal" evidence="3">
    <location>
        <begin position="26"/>
        <end position="407"/>
    </location>
</feature>
<feature type="short sequence motif" description="Involved in the stabilization of the negatively charged intermediate by the formation of the oxyanion hole" evidence="1">
    <location>
        <begin position="119"/>
        <end position="121"/>
    </location>
</feature>
<feature type="active site" evidence="2">
    <location>
        <position position="193"/>
    </location>
</feature>
<feature type="active site" evidence="2">
    <location>
        <position position="347"/>
    </location>
</feature>
<feature type="active site" evidence="2">
    <location>
        <position position="377"/>
    </location>
</feature>
<feature type="glycosylation site" description="N-linked (GlcNAc...) asparagine" evidence="3">
    <location>
        <position position="168"/>
    </location>
</feature>
<reference key="1">
    <citation type="journal article" date="2005" name="Science">
        <title>The transcriptional landscape of the mammalian genome.</title>
        <authorList>
            <person name="Carninci P."/>
            <person name="Kasukawa T."/>
            <person name="Katayama S."/>
            <person name="Gough J."/>
            <person name="Frith M.C."/>
            <person name="Maeda N."/>
            <person name="Oyama R."/>
            <person name="Ravasi T."/>
            <person name="Lenhard B."/>
            <person name="Wells C."/>
            <person name="Kodzius R."/>
            <person name="Shimokawa K."/>
            <person name="Bajic V.B."/>
            <person name="Brenner S.E."/>
            <person name="Batalov S."/>
            <person name="Forrest A.R."/>
            <person name="Zavolan M."/>
            <person name="Davis M.J."/>
            <person name="Wilming L.G."/>
            <person name="Aidinis V."/>
            <person name="Allen J.E."/>
            <person name="Ambesi-Impiombato A."/>
            <person name="Apweiler R."/>
            <person name="Aturaliya R.N."/>
            <person name="Bailey T.L."/>
            <person name="Bansal M."/>
            <person name="Baxter L."/>
            <person name="Beisel K.W."/>
            <person name="Bersano T."/>
            <person name="Bono H."/>
            <person name="Chalk A.M."/>
            <person name="Chiu K.P."/>
            <person name="Choudhary V."/>
            <person name="Christoffels A."/>
            <person name="Clutterbuck D.R."/>
            <person name="Crowe M.L."/>
            <person name="Dalla E."/>
            <person name="Dalrymple B.P."/>
            <person name="de Bono B."/>
            <person name="Della Gatta G."/>
            <person name="di Bernardo D."/>
            <person name="Down T."/>
            <person name="Engstrom P."/>
            <person name="Fagiolini M."/>
            <person name="Faulkner G."/>
            <person name="Fletcher C.F."/>
            <person name="Fukushima T."/>
            <person name="Furuno M."/>
            <person name="Futaki S."/>
            <person name="Gariboldi M."/>
            <person name="Georgii-Hemming P."/>
            <person name="Gingeras T.R."/>
            <person name="Gojobori T."/>
            <person name="Green R.E."/>
            <person name="Gustincich S."/>
            <person name="Harbers M."/>
            <person name="Hayashi Y."/>
            <person name="Hensch T.K."/>
            <person name="Hirokawa N."/>
            <person name="Hill D."/>
            <person name="Huminiecki L."/>
            <person name="Iacono M."/>
            <person name="Ikeo K."/>
            <person name="Iwama A."/>
            <person name="Ishikawa T."/>
            <person name="Jakt M."/>
            <person name="Kanapin A."/>
            <person name="Katoh M."/>
            <person name="Kawasawa Y."/>
            <person name="Kelso J."/>
            <person name="Kitamura H."/>
            <person name="Kitano H."/>
            <person name="Kollias G."/>
            <person name="Krishnan S.P."/>
            <person name="Kruger A."/>
            <person name="Kummerfeld S.K."/>
            <person name="Kurochkin I.V."/>
            <person name="Lareau L.F."/>
            <person name="Lazarevic D."/>
            <person name="Lipovich L."/>
            <person name="Liu J."/>
            <person name="Liuni S."/>
            <person name="McWilliam S."/>
            <person name="Madan Babu M."/>
            <person name="Madera M."/>
            <person name="Marchionni L."/>
            <person name="Matsuda H."/>
            <person name="Matsuzawa S."/>
            <person name="Miki H."/>
            <person name="Mignone F."/>
            <person name="Miyake S."/>
            <person name="Morris K."/>
            <person name="Mottagui-Tabar S."/>
            <person name="Mulder N."/>
            <person name="Nakano N."/>
            <person name="Nakauchi H."/>
            <person name="Ng P."/>
            <person name="Nilsson R."/>
            <person name="Nishiguchi S."/>
            <person name="Nishikawa S."/>
            <person name="Nori F."/>
            <person name="Ohara O."/>
            <person name="Okazaki Y."/>
            <person name="Orlando V."/>
            <person name="Pang K.C."/>
            <person name="Pavan W.J."/>
            <person name="Pavesi G."/>
            <person name="Pesole G."/>
            <person name="Petrovsky N."/>
            <person name="Piazza S."/>
            <person name="Reed J."/>
            <person name="Reid J.F."/>
            <person name="Ring B.Z."/>
            <person name="Ringwald M."/>
            <person name="Rost B."/>
            <person name="Ruan Y."/>
            <person name="Salzberg S.L."/>
            <person name="Sandelin A."/>
            <person name="Schneider C."/>
            <person name="Schoenbach C."/>
            <person name="Sekiguchi K."/>
            <person name="Semple C.A."/>
            <person name="Seno S."/>
            <person name="Sessa L."/>
            <person name="Sheng Y."/>
            <person name="Shibata Y."/>
            <person name="Shimada H."/>
            <person name="Shimada K."/>
            <person name="Silva D."/>
            <person name="Sinclair B."/>
            <person name="Sperling S."/>
            <person name="Stupka E."/>
            <person name="Sugiura K."/>
            <person name="Sultana R."/>
            <person name="Takenaka Y."/>
            <person name="Taki K."/>
            <person name="Tammoja K."/>
            <person name="Tan S.L."/>
            <person name="Tang S."/>
            <person name="Taylor M.S."/>
            <person name="Tegner J."/>
            <person name="Teichmann S.A."/>
            <person name="Ueda H.R."/>
            <person name="van Nimwegen E."/>
            <person name="Verardo R."/>
            <person name="Wei C.L."/>
            <person name="Yagi K."/>
            <person name="Yamanishi H."/>
            <person name="Zabarovsky E."/>
            <person name="Zhu S."/>
            <person name="Zimmer A."/>
            <person name="Hide W."/>
            <person name="Bult C."/>
            <person name="Grimmond S.M."/>
            <person name="Teasdale R.D."/>
            <person name="Liu E.T."/>
            <person name="Brusic V."/>
            <person name="Quackenbush J."/>
            <person name="Wahlestedt C."/>
            <person name="Mattick J.S."/>
            <person name="Hume D.A."/>
            <person name="Kai C."/>
            <person name="Sasaki D."/>
            <person name="Tomaru Y."/>
            <person name="Fukuda S."/>
            <person name="Kanamori-Katayama M."/>
            <person name="Suzuki M."/>
            <person name="Aoki J."/>
            <person name="Arakawa T."/>
            <person name="Iida J."/>
            <person name="Imamura K."/>
            <person name="Itoh M."/>
            <person name="Kato T."/>
            <person name="Kawaji H."/>
            <person name="Kawagashira N."/>
            <person name="Kawashima T."/>
            <person name="Kojima M."/>
            <person name="Kondo S."/>
            <person name="Konno H."/>
            <person name="Nakano K."/>
            <person name="Ninomiya N."/>
            <person name="Nishio T."/>
            <person name="Okada M."/>
            <person name="Plessy C."/>
            <person name="Shibata K."/>
            <person name="Shiraki T."/>
            <person name="Suzuki S."/>
            <person name="Tagami M."/>
            <person name="Waki K."/>
            <person name="Watahiki A."/>
            <person name="Okamura-Oho Y."/>
            <person name="Suzuki H."/>
            <person name="Kawai J."/>
            <person name="Hayashizaki Y."/>
        </authorList>
    </citation>
    <scope>NUCLEOTIDE SEQUENCE [LARGE SCALE MRNA]</scope>
    <source>
        <strain>C57BL/6J</strain>
        <tissue>Embryo</tissue>
    </source>
</reference>
<reference key="2">
    <citation type="journal article" date="2009" name="PLoS Biol.">
        <title>Lineage-specific biology revealed by a finished genome assembly of the mouse.</title>
        <authorList>
            <person name="Church D.M."/>
            <person name="Goodstadt L."/>
            <person name="Hillier L.W."/>
            <person name="Zody M.C."/>
            <person name="Goldstein S."/>
            <person name="She X."/>
            <person name="Bult C.J."/>
            <person name="Agarwala R."/>
            <person name="Cherry J.L."/>
            <person name="DiCuccio M."/>
            <person name="Hlavina W."/>
            <person name="Kapustin Y."/>
            <person name="Meric P."/>
            <person name="Maglott D."/>
            <person name="Birtle Z."/>
            <person name="Marques A.C."/>
            <person name="Graves T."/>
            <person name="Zhou S."/>
            <person name="Teague B."/>
            <person name="Potamousis K."/>
            <person name="Churas C."/>
            <person name="Place M."/>
            <person name="Herschleb J."/>
            <person name="Runnheim R."/>
            <person name="Forrest D."/>
            <person name="Amos-Landgraf J."/>
            <person name="Schwartz D.C."/>
            <person name="Cheng Z."/>
            <person name="Lindblad-Toh K."/>
            <person name="Eichler E.E."/>
            <person name="Ponting C.P."/>
        </authorList>
    </citation>
    <scope>NUCLEOTIDE SEQUENCE [LARGE SCALE GENOMIC DNA]</scope>
    <source>
        <strain>C57BL/6J</strain>
    </source>
</reference>
<proteinExistence type="evidence at transcript level"/>
<comment type="subcellular location">
    <subcellularLocation>
        <location evidence="4">Membrane</location>
        <topology evidence="4">Single-pass membrane protein</topology>
    </subcellularLocation>
</comment>
<comment type="similarity">
    <text evidence="4">Belongs to the 'GDXG' lipolytic enzyme family.</text>
</comment>
<comment type="sequence caution" evidence="4">
    <conflict type="erroneous termination">
        <sequence resource="EMBL-CDS" id="BAC28757"/>
    </conflict>
    <text>Truncated C-terminus.</text>
</comment>
<gene>
    <name evidence="5" type="primary">Aadacl4fm1</name>
</gene>
<dbReference type="EC" id="3.1.1.-"/>
<dbReference type="EMBL" id="AK034567">
    <property type="protein sequence ID" value="BAC28757.1"/>
    <property type="status" value="ALT_SEQ"/>
    <property type="molecule type" value="mRNA"/>
</dbReference>
<dbReference type="EMBL" id="AL606902">
    <property type="status" value="NOT_ANNOTATED_CDS"/>
    <property type="molecule type" value="Genomic_DNA"/>
</dbReference>
<dbReference type="CCDS" id="CCDS51366.1"/>
<dbReference type="RefSeq" id="NP_941064.2">
    <property type="nucleotide sequence ID" value="NM_198662.3"/>
</dbReference>
<dbReference type="SMR" id="Q8BM81"/>
<dbReference type="STRING" id="10090.ENSMUSP00000030328"/>
<dbReference type="ESTHER" id="mouse-adcl4">
    <property type="family name" value="Arylacetamide_deacetylase"/>
</dbReference>
<dbReference type="MEROPS" id="S09.968"/>
<dbReference type="GlyCosmos" id="Q8BM81">
    <property type="glycosylation" value="1 site, No reported glycans"/>
</dbReference>
<dbReference type="GlyGen" id="Q8BM81">
    <property type="glycosylation" value="1 site"/>
</dbReference>
<dbReference type="PhosphoSitePlus" id="Q8BM81"/>
<dbReference type="PaxDb" id="10090-ENSMUSP00000030328"/>
<dbReference type="DNASU" id="381572"/>
<dbReference type="Ensembl" id="ENSMUST00000030328.3">
    <property type="protein sequence ID" value="ENSMUSP00000030328.3"/>
    <property type="gene ID" value="ENSMUSG00000028593.6"/>
</dbReference>
<dbReference type="GeneID" id="381572"/>
<dbReference type="KEGG" id="mmu:381572"/>
<dbReference type="UCSC" id="uc008vrh.1">
    <property type="organism name" value="mouse"/>
</dbReference>
<dbReference type="AGR" id="MGI:2685880"/>
<dbReference type="CTD" id="381572"/>
<dbReference type="MGI" id="MGI:2685880">
    <property type="gene designation" value="Aadacl4fm1"/>
</dbReference>
<dbReference type="VEuPathDB" id="HostDB:ENSMUSG00000028593"/>
<dbReference type="eggNOG" id="KOG1515">
    <property type="taxonomic scope" value="Eukaryota"/>
</dbReference>
<dbReference type="GeneTree" id="ENSGT00940000157630"/>
<dbReference type="HOGENOM" id="CLU_012494_12_2_1"/>
<dbReference type="InParanoid" id="Q8BM81"/>
<dbReference type="OMA" id="YLETKHA"/>
<dbReference type="OrthoDB" id="408631at2759"/>
<dbReference type="PhylomeDB" id="Q8BM81"/>
<dbReference type="TreeFam" id="TF314978"/>
<dbReference type="BioGRID-ORCS" id="381572">
    <property type="hits" value="0 hits in 75 CRISPR screens"/>
</dbReference>
<dbReference type="PRO" id="PR:Q8BM81"/>
<dbReference type="Proteomes" id="UP000000589">
    <property type="component" value="Chromosome 4"/>
</dbReference>
<dbReference type="RNAct" id="Q8BM81">
    <property type="molecule type" value="protein"/>
</dbReference>
<dbReference type="Bgee" id="ENSMUSG00000028593">
    <property type="expression patterns" value="Expressed in neural tube mantle layer and 12 other cell types or tissues"/>
</dbReference>
<dbReference type="GO" id="GO:0016020">
    <property type="term" value="C:membrane"/>
    <property type="evidence" value="ECO:0007669"/>
    <property type="project" value="UniProtKB-SubCell"/>
</dbReference>
<dbReference type="GO" id="GO:0016787">
    <property type="term" value="F:hydrolase activity"/>
    <property type="evidence" value="ECO:0007669"/>
    <property type="project" value="UniProtKB-KW"/>
</dbReference>
<dbReference type="Gene3D" id="3.40.50.1820">
    <property type="entry name" value="alpha/beta hydrolase"/>
    <property type="match status" value="1"/>
</dbReference>
<dbReference type="InterPro" id="IPR013094">
    <property type="entry name" value="AB_hydrolase_3"/>
</dbReference>
<dbReference type="InterPro" id="IPR029058">
    <property type="entry name" value="AB_hydrolase_fold"/>
</dbReference>
<dbReference type="InterPro" id="IPR050300">
    <property type="entry name" value="GDXG_lipolytic_enzyme"/>
</dbReference>
<dbReference type="PANTHER" id="PTHR48081">
    <property type="entry name" value="AB HYDROLASE SUPERFAMILY PROTEIN C4A8.06C"/>
    <property type="match status" value="1"/>
</dbReference>
<dbReference type="PANTHER" id="PTHR48081:SF32">
    <property type="entry name" value="ALPHA_BETA HYDROLASE FOLD-3 DOMAIN-CONTAINING PROTEIN"/>
    <property type="match status" value="1"/>
</dbReference>
<dbReference type="Pfam" id="PF07859">
    <property type="entry name" value="Abhydrolase_3"/>
    <property type="match status" value="2"/>
</dbReference>
<dbReference type="SUPFAM" id="SSF53474">
    <property type="entry name" value="alpha/beta-Hydrolases"/>
    <property type="match status" value="1"/>
</dbReference>
<protein>
    <recommendedName>
        <fullName evidence="4">Arylacetamide deacetylase-like 4 family member 1</fullName>
        <ecNumber>3.1.1.-</ecNumber>
    </recommendedName>
    <alternativeName>
        <fullName evidence="5">AADACL4 family member 1</fullName>
    </alternativeName>
</protein>
<organism>
    <name type="scientific">Mus musculus</name>
    <name type="common">Mouse</name>
    <dbReference type="NCBI Taxonomy" id="10090"/>
    <lineage>
        <taxon>Eukaryota</taxon>
        <taxon>Metazoa</taxon>
        <taxon>Chordata</taxon>
        <taxon>Craniata</taxon>
        <taxon>Vertebrata</taxon>
        <taxon>Euteleostomi</taxon>
        <taxon>Mammalia</taxon>
        <taxon>Eutheria</taxon>
        <taxon>Euarchontoglires</taxon>
        <taxon>Glires</taxon>
        <taxon>Rodentia</taxon>
        <taxon>Myomorpha</taxon>
        <taxon>Muroidea</taxon>
        <taxon>Muridae</taxon>
        <taxon>Murinae</taxon>
        <taxon>Mus</taxon>
        <taxon>Mus</taxon>
    </lineage>
</organism>
<sequence>MLYLVGFLLATVCLLVLGVNVWVLIDHFLTIDVPPSIPHPVKFRILHFCFHLTTTWGHILEKMNICSMPQFFCFLQDSLSSKENHGVFVKDLRFGTIPVRLFRPKAASSKPRRGILFFHGGGAMIGSLDSHHNLCTFLARETDSVLVSVGYRKLPYYHHPSLYHDCINASIHFLKSLKAYGIDPSRVVICGESIGGAAAVVVTQTLLSRTDIPKIRAQVLIYPILQAFYFQSPSHLMHKNIPFLTKDFMITCICKYLAIDFSWKDAMLTGACISPSAWKKYEKWLSPDNIPKRFRTTYQPPESPAPFNEAAYLETKHAMNIDISPLVADDKIIAQLPEAFLVSLHWDIIRDDVLLYKKRLEDQGVPVTWHHVEDGFHGCILLFDKKLFSFPCSLNIVNAVVSYIKDL</sequence>
<name>AD4F1_MOUSE</name>